<organism>
    <name type="scientific">Clostridium botulinum (strain Okra / Type B1)</name>
    <dbReference type="NCBI Taxonomy" id="498213"/>
    <lineage>
        <taxon>Bacteria</taxon>
        <taxon>Bacillati</taxon>
        <taxon>Bacillota</taxon>
        <taxon>Clostridia</taxon>
        <taxon>Eubacteriales</taxon>
        <taxon>Clostridiaceae</taxon>
        <taxon>Clostridium</taxon>
    </lineage>
</organism>
<accession>B1ING1</accession>
<keyword id="KW-0227">DNA damage</keyword>
<keyword id="KW-0234">DNA repair</keyword>
<keyword id="KW-0235">DNA replication</keyword>
<keyword id="KW-0436">Ligase</keyword>
<keyword id="KW-0460">Magnesium</keyword>
<keyword id="KW-0464">Manganese</keyword>
<keyword id="KW-0479">Metal-binding</keyword>
<keyword id="KW-0520">NAD</keyword>
<keyword id="KW-0862">Zinc</keyword>
<dbReference type="EC" id="6.5.1.2" evidence="1"/>
<dbReference type="EMBL" id="CP000939">
    <property type="protein sequence ID" value="ACA45128.1"/>
    <property type="molecule type" value="Genomic_DNA"/>
</dbReference>
<dbReference type="RefSeq" id="WP_003400644.1">
    <property type="nucleotide sequence ID" value="NC_010516.1"/>
</dbReference>
<dbReference type="SMR" id="B1ING1"/>
<dbReference type="KEGG" id="cbb:CLD_1252"/>
<dbReference type="HOGENOM" id="CLU_007764_2_1_9"/>
<dbReference type="Proteomes" id="UP000008541">
    <property type="component" value="Chromosome"/>
</dbReference>
<dbReference type="GO" id="GO:0005829">
    <property type="term" value="C:cytosol"/>
    <property type="evidence" value="ECO:0007669"/>
    <property type="project" value="TreeGrafter"/>
</dbReference>
<dbReference type="GO" id="GO:0003677">
    <property type="term" value="F:DNA binding"/>
    <property type="evidence" value="ECO:0007669"/>
    <property type="project" value="InterPro"/>
</dbReference>
<dbReference type="GO" id="GO:0003911">
    <property type="term" value="F:DNA ligase (NAD+) activity"/>
    <property type="evidence" value="ECO:0007669"/>
    <property type="project" value="UniProtKB-UniRule"/>
</dbReference>
<dbReference type="GO" id="GO:0046872">
    <property type="term" value="F:metal ion binding"/>
    <property type="evidence" value="ECO:0007669"/>
    <property type="project" value="UniProtKB-KW"/>
</dbReference>
<dbReference type="GO" id="GO:0006281">
    <property type="term" value="P:DNA repair"/>
    <property type="evidence" value="ECO:0007669"/>
    <property type="project" value="UniProtKB-KW"/>
</dbReference>
<dbReference type="GO" id="GO:0006260">
    <property type="term" value="P:DNA replication"/>
    <property type="evidence" value="ECO:0007669"/>
    <property type="project" value="UniProtKB-KW"/>
</dbReference>
<dbReference type="CDD" id="cd17748">
    <property type="entry name" value="BRCT_DNA_ligase_like"/>
    <property type="match status" value="1"/>
</dbReference>
<dbReference type="CDD" id="cd09897">
    <property type="entry name" value="H3TH_FEN1-XPG-like"/>
    <property type="match status" value="1"/>
</dbReference>
<dbReference type="CDD" id="cd00114">
    <property type="entry name" value="LIGANc"/>
    <property type="match status" value="1"/>
</dbReference>
<dbReference type="FunFam" id="1.10.150.20:FF:000006">
    <property type="entry name" value="DNA ligase"/>
    <property type="match status" value="1"/>
</dbReference>
<dbReference type="FunFam" id="1.10.150.20:FF:000007">
    <property type="entry name" value="DNA ligase"/>
    <property type="match status" value="1"/>
</dbReference>
<dbReference type="FunFam" id="2.40.50.140:FF:000012">
    <property type="entry name" value="DNA ligase"/>
    <property type="match status" value="1"/>
</dbReference>
<dbReference type="FunFam" id="3.30.470.30:FF:000030">
    <property type="entry name" value="DNA ligase"/>
    <property type="match status" value="1"/>
</dbReference>
<dbReference type="Gene3D" id="1.10.150.20">
    <property type="entry name" value="5' to 3' exonuclease, C-terminal subdomain"/>
    <property type="match status" value="2"/>
</dbReference>
<dbReference type="Gene3D" id="3.40.50.10190">
    <property type="entry name" value="BRCT domain"/>
    <property type="match status" value="1"/>
</dbReference>
<dbReference type="Gene3D" id="3.30.470.30">
    <property type="entry name" value="DNA ligase/mRNA capping enzyme"/>
    <property type="match status" value="1"/>
</dbReference>
<dbReference type="Gene3D" id="1.10.287.610">
    <property type="entry name" value="Helix hairpin bin"/>
    <property type="match status" value="1"/>
</dbReference>
<dbReference type="Gene3D" id="2.40.50.140">
    <property type="entry name" value="Nucleic acid-binding proteins"/>
    <property type="match status" value="1"/>
</dbReference>
<dbReference type="HAMAP" id="MF_01588">
    <property type="entry name" value="DNA_ligase_A"/>
    <property type="match status" value="1"/>
</dbReference>
<dbReference type="InterPro" id="IPR001357">
    <property type="entry name" value="BRCT_dom"/>
</dbReference>
<dbReference type="InterPro" id="IPR036420">
    <property type="entry name" value="BRCT_dom_sf"/>
</dbReference>
<dbReference type="InterPro" id="IPR041663">
    <property type="entry name" value="DisA/LigA_HHH"/>
</dbReference>
<dbReference type="InterPro" id="IPR001679">
    <property type="entry name" value="DNA_ligase"/>
</dbReference>
<dbReference type="InterPro" id="IPR033136">
    <property type="entry name" value="DNA_ligase_CS"/>
</dbReference>
<dbReference type="InterPro" id="IPR013839">
    <property type="entry name" value="DNAligase_adenylation"/>
</dbReference>
<dbReference type="InterPro" id="IPR013840">
    <property type="entry name" value="DNAligase_N"/>
</dbReference>
<dbReference type="InterPro" id="IPR003583">
    <property type="entry name" value="Hlx-hairpin-Hlx_DNA-bd_motif"/>
</dbReference>
<dbReference type="InterPro" id="IPR012340">
    <property type="entry name" value="NA-bd_OB-fold"/>
</dbReference>
<dbReference type="InterPro" id="IPR004150">
    <property type="entry name" value="NAD_DNA_ligase_OB"/>
</dbReference>
<dbReference type="InterPro" id="IPR010994">
    <property type="entry name" value="RuvA_2-like"/>
</dbReference>
<dbReference type="NCBIfam" id="TIGR00575">
    <property type="entry name" value="dnlj"/>
    <property type="match status" value="1"/>
</dbReference>
<dbReference type="NCBIfam" id="NF005932">
    <property type="entry name" value="PRK07956.1"/>
    <property type="match status" value="1"/>
</dbReference>
<dbReference type="PANTHER" id="PTHR23389">
    <property type="entry name" value="CHROMOSOME TRANSMISSION FIDELITY FACTOR 18"/>
    <property type="match status" value="1"/>
</dbReference>
<dbReference type="PANTHER" id="PTHR23389:SF9">
    <property type="entry name" value="DNA LIGASE"/>
    <property type="match status" value="1"/>
</dbReference>
<dbReference type="Pfam" id="PF00533">
    <property type="entry name" value="BRCT"/>
    <property type="match status" value="1"/>
</dbReference>
<dbReference type="Pfam" id="PF01653">
    <property type="entry name" value="DNA_ligase_aden"/>
    <property type="match status" value="1"/>
</dbReference>
<dbReference type="Pfam" id="PF03120">
    <property type="entry name" value="DNA_ligase_OB"/>
    <property type="match status" value="1"/>
</dbReference>
<dbReference type="Pfam" id="PF12826">
    <property type="entry name" value="HHH_2"/>
    <property type="match status" value="1"/>
</dbReference>
<dbReference type="Pfam" id="PF14520">
    <property type="entry name" value="HHH_5"/>
    <property type="match status" value="1"/>
</dbReference>
<dbReference type="PIRSF" id="PIRSF001604">
    <property type="entry name" value="LigA"/>
    <property type="match status" value="1"/>
</dbReference>
<dbReference type="SMART" id="SM00292">
    <property type="entry name" value="BRCT"/>
    <property type="match status" value="1"/>
</dbReference>
<dbReference type="SMART" id="SM00278">
    <property type="entry name" value="HhH1"/>
    <property type="match status" value="4"/>
</dbReference>
<dbReference type="SMART" id="SM00532">
    <property type="entry name" value="LIGANc"/>
    <property type="match status" value="1"/>
</dbReference>
<dbReference type="SUPFAM" id="SSF52113">
    <property type="entry name" value="BRCT domain"/>
    <property type="match status" value="1"/>
</dbReference>
<dbReference type="SUPFAM" id="SSF56091">
    <property type="entry name" value="DNA ligase/mRNA capping enzyme, catalytic domain"/>
    <property type="match status" value="1"/>
</dbReference>
<dbReference type="SUPFAM" id="SSF50249">
    <property type="entry name" value="Nucleic acid-binding proteins"/>
    <property type="match status" value="1"/>
</dbReference>
<dbReference type="SUPFAM" id="SSF47781">
    <property type="entry name" value="RuvA domain 2-like"/>
    <property type="match status" value="1"/>
</dbReference>
<dbReference type="PROSITE" id="PS50172">
    <property type="entry name" value="BRCT"/>
    <property type="match status" value="1"/>
</dbReference>
<dbReference type="PROSITE" id="PS01056">
    <property type="entry name" value="DNA_LIGASE_N2"/>
    <property type="match status" value="1"/>
</dbReference>
<name>DNLJ_CLOBK</name>
<gene>
    <name evidence="1" type="primary">ligA</name>
    <name type="ordered locus">CLD_1252</name>
</gene>
<comment type="function">
    <text evidence="1">DNA ligase that catalyzes the formation of phosphodiester linkages between 5'-phosphoryl and 3'-hydroxyl groups in double-stranded DNA using NAD as a coenzyme and as the energy source for the reaction. It is essential for DNA replication and repair of damaged DNA.</text>
</comment>
<comment type="catalytic activity">
    <reaction evidence="1">
        <text>NAD(+) + (deoxyribonucleotide)n-3'-hydroxyl + 5'-phospho-(deoxyribonucleotide)m = (deoxyribonucleotide)n+m + AMP + beta-nicotinamide D-nucleotide.</text>
        <dbReference type="EC" id="6.5.1.2"/>
    </reaction>
</comment>
<comment type="cofactor">
    <cofactor evidence="1">
        <name>Mg(2+)</name>
        <dbReference type="ChEBI" id="CHEBI:18420"/>
    </cofactor>
    <cofactor evidence="1">
        <name>Mn(2+)</name>
        <dbReference type="ChEBI" id="CHEBI:29035"/>
    </cofactor>
</comment>
<comment type="similarity">
    <text evidence="1">Belongs to the NAD-dependent DNA ligase family. LigA subfamily.</text>
</comment>
<sequence length="664" mass="75835">MDNKLEKMKELVEELNQYAYEYYVLDNPSISDKEYDLKYDELVILEKKTEVTLPYSPTQRVGDKILGEFSKYTHKGRLWSLDKAQNMEQLIEWHNRNLKVIEQYNSMSEDKLPELRYIVTKKFDGLTVNCTYDENGILIKSATRGTGIIGEDITAQIKTIKTVPLKIKNSHVIEVHGEAIMTKTAFEEYNKAAQVPLKNLRNGAAGALRNLDIKETARRNLSAFFYDVGYNEGPEFKSYREMMNFIKNMGLPQDKYIKECTNMEEVEKEIEYIESIRGELDYDIDGAVIVVDDIKTREILGYTIKFPKWAIAYKFEAKEITTKLLDVEWNVGRSGRVTPTALLEPVELGGVTVKRATLNNMDDIKRKNVKLGAKVLVRRSNDVIPEIMGVVEESLEESEEIQAPDRCPYCNSHLVQNGVHYYCENTLSCKPQMVKSIVHFASREAMNIAGFSEKTAEQLFEKLDIKSIADLYKIKKEELLTLEKFKDKKSQNLIDAIQNSKNCDLASFIYALGIPNVGKKTANDLVMKFKTLESIKNTTIEQLVEVPDVGEIVAKSIYDFFEDEKIISNIEELLNLGVKPYYEEERIDENPFMDKTIVVTGSLNNYSRGEIKDKLQSLGAKVSSSVSKNTDYVLVGEKPGSKYEKAIELGVKVINEEEFSNKIK</sequence>
<feature type="chain" id="PRO_0000380343" description="DNA ligase">
    <location>
        <begin position="1"/>
        <end position="664"/>
    </location>
</feature>
<feature type="domain" description="BRCT" evidence="1">
    <location>
        <begin position="587"/>
        <end position="664"/>
    </location>
</feature>
<feature type="active site" description="N6-AMP-lysine intermediate" evidence="1">
    <location>
        <position position="122"/>
    </location>
</feature>
<feature type="binding site" evidence="1">
    <location>
        <begin position="32"/>
        <end position="36"/>
    </location>
    <ligand>
        <name>NAD(+)</name>
        <dbReference type="ChEBI" id="CHEBI:57540"/>
    </ligand>
</feature>
<feature type="binding site" evidence="1">
    <location>
        <begin position="80"/>
        <end position="81"/>
    </location>
    <ligand>
        <name>NAD(+)</name>
        <dbReference type="ChEBI" id="CHEBI:57540"/>
    </ligand>
</feature>
<feature type="binding site" evidence="1">
    <location>
        <position position="144"/>
    </location>
    <ligand>
        <name>NAD(+)</name>
        <dbReference type="ChEBI" id="CHEBI:57540"/>
    </ligand>
</feature>
<feature type="binding site" evidence="1">
    <location>
        <position position="178"/>
    </location>
    <ligand>
        <name>NAD(+)</name>
        <dbReference type="ChEBI" id="CHEBI:57540"/>
    </ligand>
</feature>
<feature type="binding site" evidence="1">
    <location>
        <position position="314"/>
    </location>
    <ligand>
        <name>NAD(+)</name>
        <dbReference type="ChEBI" id="CHEBI:57540"/>
    </ligand>
</feature>
<feature type="binding site" evidence="1">
    <location>
        <position position="407"/>
    </location>
    <ligand>
        <name>Zn(2+)</name>
        <dbReference type="ChEBI" id="CHEBI:29105"/>
    </ligand>
</feature>
<feature type="binding site" evidence="1">
    <location>
        <position position="410"/>
    </location>
    <ligand>
        <name>Zn(2+)</name>
        <dbReference type="ChEBI" id="CHEBI:29105"/>
    </ligand>
</feature>
<feature type="binding site" evidence="1">
    <location>
        <position position="423"/>
    </location>
    <ligand>
        <name>Zn(2+)</name>
        <dbReference type="ChEBI" id="CHEBI:29105"/>
    </ligand>
</feature>
<feature type="binding site" evidence="1">
    <location>
        <position position="429"/>
    </location>
    <ligand>
        <name>Zn(2+)</name>
        <dbReference type="ChEBI" id="CHEBI:29105"/>
    </ligand>
</feature>
<evidence type="ECO:0000255" key="1">
    <source>
        <dbReference type="HAMAP-Rule" id="MF_01588"/>
    </source>
</evidence>
<proteinExistence type="inferred from homology"/>
<reference key="1">
    <citation type="journal article" date="2007" name="PLoS ONE">
        <title>Analysis of the neurotoxin complex genes in Clostridium botulinum A1-A4 and B1 strains: BoNT/A3, /Ba4 and /B1 clusters are located within plasmids.</title>
        <authorList>
            <person name="Smith T.J."/>
            <person name="Hill K.K."/>
            <person name="Foley B.T."/>
            <person name="Detter J.C."/>
            <person name="Munk A.C."/>
            <person name="Bruce D.C."/>
            <person name="Doggett N.A."/>
            <person name="Smith L.A."/>
            <person name="Marks J.D."/>
            <person name="Xie G."/>
            <person name="Brettin T.S."/>
        </authorList>
    </citation>
    <scope>NUCLEOTIDE SEQUENCE [LARGE SCALE GENOMIC DNA]</scope>
    <source>
        <strain>Okra / Type B1</strain>
    </source>
</reference>
<protein>
    <recommendedName>
        <fullName evidence="1">DNA ligase</fullName>
        <ecNumber evidence="1">6.5.1.2</ecNumber>
    </recommendedName>
    <alternativeName>
        <fullName evidence="1">Polydeoxyribonucleotide synthase [NAD(+)]</fullName>
    </alternativeName>
</protein>